<reference key="1">
    <citation type="journal article" date="1990" name="Mol. Gen. Genet.">
        <title>The alpha-amylase genes in Oryza sativa: characterization of cDNA clones and mRNA expression during seed germination.</title>
        <authorList>
            <person name="O'Neill S.D."/>
            <person name="Kumagai M.H."/>
            <person name="Majumdar A."/>
            <person name="Huang N."/>
            <person name="Sutliff T.D."/>
            <person name="Rodriguez R.L."/>
        </authorList>
    </citation>
    <scope>NUCLEOTIDE SEQUENCE [MRNA]</scope>
    <source>
        <strain>cv. M202</strain>
    </source>
</reference>
<reference key="2">
    <citation type="journal article" date="1990" name="Plant Mol. Biol.">
        <title>Classification and characterization of the rice alpha-amylase multigene family.</title>
        <authorList>
            <person name="Huang N."/>
            <person name="Sutliff T.D."/>
            <person name="Litts J.C."/>
            <person name="Rodriguez R.L."/>
        </authorList>
    </citation>
    <scope>NUCLEOTIDE SEQUENCE [GENOMIC DNA]</scope>
    <source>
        <strain>cv. M202</strain>
    </source>
</reference>
<reference key="3">
    <citation type="journal article" date="2005" name="Nature">
        <title>The map-based sequence of the rice genome.</title>
        <authorList>
            <consortium name="International rice genome sequencing project (IRGSP)"/>
        </authorList>
    </citation>
    <scope>NUCLEOTIDE SEQUENCE [LARGE SCALE GENOMIC DNA]</scope>
    <source>
        <strain>cv. Nipponbare</strain>
    </source>
</reference>
<reference key="4">
    <citation type="journal article" date="2013" name="Rice">
        <title>Improvement of the Oryza sativa Nipponbare reference genome using next generation sequence and optical map data.</title>
        <authorList>
            <person name="Kawahara Y."/>
            <person name="de la Bastide M."/>
            <person name="Hamilton J.P."/>
            <person name="Kanamori H."/>
            <person name="McCombie W.R."/>
            <person name="Ouyang S."/>
            <person name="Schwartz D.C."/>
            <person name="Tanaka T."/>
            <person name="Wu J."/>
            <person name="Zhou S."/>
            <person name="Childs K.L."/>
            <person name="Davidson R.M."/>
            <person name="Lin H."/>
            <person name="Quesada-Ocampo L."/>
            <person name="Vaillancourt B."/>
            <person name="Sakai H."/>
            <person name="Lee S.S."/>
            <person name="Kim J."/>
            <person name="Numa H."/>
            <person name="Itoh T."/>
            <person name="Buell C.R."/>
            <person name="Matsumoto T."/>
        </authorList>
    </citation>
    <scope>GENOME REANNOTATION</scope>
    <source>
        <strain>cv. Nipponbare</strain>
    </source>
</reference>
<gene>
    <name type="primary">AMY1.1</name>
    <name type="synonym">AMY1A</name>
    <name type="ordered locus">Os02g0765600</name>
    <name type="ordered locus">LOC_Os02g52710</name>
    <name type="ORF">OJ1004_A11.13</name>
    <name type="ORF">P0539D10.32</name>
</gene>
<proteinExistence type="evidence at protein level"/>
<feature type="signal peptide" evidence="4">
    <location>
        <begin position="1"/>
        <end position="31"/>
    </location>
</feature>
<feature type="chain" id="PRO_0000001408" description="Alpha-amylase">
    <location>
        <begin position="32"/>
        <end position="434"/>
    </location>
</feature>
<feature type="active site" description="Nucleophile" evidence="2">
    <location>
        <position position="209"/>
    </location>
</feature>
<feature type="active site" description="Proton donor" evidence="2">
    <location>
        <position position="234"/>
    </location>
</feature>
<feature type="binding site" evidence="2">
    <location>
        <begin position="75"/>
        <end position="77"/>
    </location>
    <ligand>
        <name>substrate</name>
    </ligand>
</feature>
<feature type="binding site" evidence="2">
    <location>
        <begin position="82"/>
        <end position="83"/>
    </location>
    <ligand>
        <name>substrate</name>
    </ligand>
</feature>
<feature type="binding site" evidence="2">
    <location>
        <position position="122"/>
    </location>
    <ligand>
        <name>Ca(2+)</name>
        <dbReference type="ChEBI" id="CHEBI:29108"/>
        <label>1</label>
    </ligand>
</feature>
<feature type="binding site" evidence="2">
    <location>
        <position position="139"/>
    </location>
    <ligand>
        <name>Ca(2+)</name>
        <dbReference type="ChEBI" id="CHEBI:29108"/>
        <label>2</label>
    </ligand>
</feature>
<feature type="binding site" evidence="2">
    <location>
        <position position="142"/>
    </location>
    <ligand>
        <name>Ca(2+)</name>
        <dbReference type="ChEBI" id="CHEBI:29108"/>
        <label>2</label>
    </ligand>
</feature>
<feature type="binding site" evidence="2">
    <location>
        <position position="144"/>
    </location>
    <ligand>
        <name>Ca(2+)</name>
        <dbReference type="ChEBI" id="CHEBI:29108"/>
        <label>2</label>
    </ligand>
</feature>
<feature type="binding site" evidence="2">
    <location>
        <position position="148"/>
    </location>
    <ligand>
        <name>Ca(2+)</name>
        <dbReference type="ChEBI" id="CHEBI:29108"/>
        <label>2</label>
    </ligand>
</feature>
<feature type="binding site" evidence="2">
    <location>
        <position position="158"/>
    </location>
    <ligand>
        <name>Ca(2+)</name>
        <dbReference type="ChEBI" id="CHEBI:29108"/>
        <label>3</label>
    </ligand>
</feature>
<feature type="binding site" evidence="2">
    <location>
        <position position="168"/>
    </location>
    <ligand>
        <name>Ca(2+)</name>
        <dbReference type="ChEBI" id="CHEBI:29108"/>
        <label>1</label>
    </ligand>
</feature>
<feature type="binding site" evidence="2">
    <location>
        <position position="171"/>
    </location>
    <ligand>
        <name>Ca(2+)</name>
        <dbReference type="ChEBI" id="CHEBI:29108"/>
        <label>1</label>
    </ligand>
</feature>
<feature type="binding site" evidence="2">
    <location>
        <position position="172"/>
    </location>
    <ligand>
        <name>Ca(2+)</name>
        <dbReference type="ChEBI" id="CHEBI:29108"/>
        <label>3</label>
    </ligand>
</feature>
<feature type="binding site" evidence="2">
    <location>
        <position position="173"/>
    </location>
    <ligand>
        <name>Ca(2+)</name>
        <dbReference type="ChEBI" id="CHEBI:29108"/>
        <label>3</label>
    </ligand>
</feature>
<feature type="binding site" evidence="2">
    <location>
        <position position="176"/>
    </location>
    <ligand>
        <name>Ca(2+)</name>
        <dbReference type="ChEBI" id="CHEBI:29108"/>
        <label>3</label>
    </ligand>
</feature>
<feature type="binding site" evidence="2">
    <location>
        <position position="178"/>
    </location>
    <ligand>
        <name>Ca(2+)</name>
        <dbReference type="ChEBI" id="CHEBI:29108"/>
        <label>1</label>
    </ligand>
</feature>
<feature type="binding site" evidence="2">
    <location>
        <position position="178"/>
    </location>
    <ligand>
        <name>Ca(2+)</name>
        <dbReference type="ChEBI" id="CHEBI:29108"/>
        <label>3</label>
    </ligand>
</feature>
<feature type="binding site" evidence="2">
    <location>
        <begin position="207"/>
        <end position="212"/>
    </location>
    <ligand>
        <name>substrate</name>
    </ligand>
</feature>
<feature type="binding site" evidence="2">
    <location>
        <position position="213"/>
    </location>
    <ligand>
        <name>Ca(2+)</name>
        <dbReference type="ChEBI" id="CHEBI:29108"/>
        <label>1</label>
    </ligand>
</feature>
<feature type="binding site" evidence="2">
    <location>
        <position position="236"/>
    </location>
    <ligand>
        <name>substrate</name>
    </ligand>
</feature>
<feature type="binding site" evidence="3">
    <location>
        <position position="238"/>
    </location>
    <ligand>
        <name>substrate</name>
    </ligand>
</feature>
<feature type="binding site" evidence="2">
    <location>
        <position position="256"/>
    </location>
    <ligand>
        <name>substrate</name>
    </ligand>
</feature>
<feature type="binding site" evidence="2">
    <location>
        <position position="263"/>
    </location>
    <ligand>
        <name>substrate</name>
    </ligand>
</feature>
<feature type="binding site" evidence="2">
    <location>
        <position position="300"/>
    </location>
    <ligand>
        <name>substrate</name>
    </ligand>
</feature>
<feature type="binding site" evidence="2">
    <location>
        <begin position="306"/>
        <end position="308"/>
    </location>
    <ligand>
        <name>substrate</name>
    </ligand>
</feature>
<feature type="binding site" evidence="2">
    <location>
        <position position="319"/>
    </location>
    <ligand>
        <name>substrate</name>
    </ligand>
</feature>
<feature type="binding site" evidence="2">
    <location>
        <position position="325"/>
    </location>
    <ligand>
        <name>substrate</name>
    </ligand>
</feature>
<feature type="binding site" evidence="2">
    <location>
        <position position="404"/>
    </location>
    <ligand>
        <name>substrate</name>
    </ligand>
</feature>
<feature type="binding site" evidence="2">
    <location>
        <begin position="409"/>
        <end position="411"/>
    </location>
    <ligand>
        <name>substrate</name>
    </ligand>
</feature>
<feature type="binding site" evidence="2">
    <location>
        <begin position="421"/>
        <end position="427"/>
    </location>
    <ligand>
        <name>substrate</name>
    </ligand>
</feature>
<feature type="binding site" evidence="2">
    <location>
        <position position="431"/>
    </location>
    <ligand>
        <name>substrate</name>
    </ligand>
</feature>
<feature type="site" description="Transition state stabilizer" evidence="2">
    <location>
        <position position="320"/>
    </location>
</feature>
<feature type="glycosylation site" description="N-linked (GlcNAc...) asparagine" evidence="4">
    <location>
        <position position="271"/>
    </location>
</feature>
<feature type="sequence conflict" description="In Ref. 1; AAA33885 and 2; CAA34516." evidence="4" ref="1 2">
    <original>A</original>
    <variation>G</variation>
    <location>
        <position position="272"/>
    </location>
</feature>
<feature type="strand" evidence="5">
    <location>
        <begin position="34"/>
        <end position="36"/>
    </location>
</feature>
<feature type="helix" evidence="5">
    <location>
        <begin position="42"/>
        <end position="44"/>
    </location>
</feature>
<feature type="helix" evidence="5">
    <location>
        <begin position="49"/>
        <end position="54"/>
    </location>
</feature>
<feature type="helix" evidence="5">
    <location>
        <begin position="57"/>
        <end position="62"/>
    </location>
</feature>
<feature type="strand" evidence="5">
    <location>
        <begin position="67"/>
        <end position="70"/>
    </location>
</feature>
<feature type="strand" evidence="5">
    <location>
        <begin position="76"/>
        <end position="78"/>
    </location>
</feature>
<feature type="strand" evidence="5">
    <location>
        <begin position="81"/>
        <end position="84"/>
    </location>
</feature>
<feature type="helix" evidence="5">
    <location>
        <begin position="90"/>
        <end position="92"/>
    </location>
</feature>
<feature type="helix" evidence="5">
    <location>
        <begin position="98"/>
        <end position="110"/>
    </location>
</feature>
<feature type="strand" evidence="5">
    <location>
        <begin position="114"/>
        <end position="119"/>
    </location>
</feature>
<feature type="strand" evidence="5">
    <location>
        <begin position="127"/>
        <end position="129"/>
    </location>
</feature>
<feature type="strand" evidence="5">
    <location>
        <begin position="135"/>
        <end position="137"/>
    </location>
</feature>
<feature type="strand" evidence="5">
    <location>
        <begin position="141"/>
        <end position="145"/>
    </location>
</feature>
<feature type="helix" evidence="5">
    <location>
        <begin position="151"/>
        <end position="153"/>
    </location>
</feature>
<feature type="helix" evidence="5">
    <location>
        <begin position="184"/>
        <end position="199"/>
    </location>
</feature>
<feature type="strand" evidence="5">
    <location>
        <begin position="205"/>
        <end position="208"/>
    </location>
</feature>
<feature type="helix" evidence="5">
    <location>
        <begin position="211"/>
        <end position="213"/>
    </location>
</feature>
<feature type="helix" evidence="5">
    <location>
        <begin position="216"/>
        <end position="226"/>
    </location>
</feature>
<feature type="strand" evidence="5">
    <location>
        <begin position="231"/>
        <end position="233"/>
    </location>
</feature>
<feature type="strand" evidence="5">
    <location>
        <begin position="245"/>
        <end position="247"/>
    </location>
</feature>
<feature type="helix" evidence="5">
    <location>
        <begin position="252"/>
        <end position="264"/>
    </location>
</feature>
<feature type="helix" evidence="5">
    <location>
        <begin position="267"/>
        <end position="269"/>
    </location>
</feature>
<feature type="strand" evidence="5">
    <location>
        <begin position="272"/>
        <end position="275"/>
    </location>
</feature>
<feature type="helix" evidence="5">
    <location>
        <begin position="277"/>
        <end position="286"/>
    </location>
</feature>
<feature type="turn" evidence="5">
    <location>
        <begin position="287"/>
        <end position="289"/>
    </location>
</feature>
<feature type="helix" evidence="5">
    <location>
        <begin position="291"/>
        <end position="294"/>
    </location>
</feature>
<feature type="helix" evidence="5">
    <location>
        <begin position="304"/>
        <end position="306"/>
    </location>
</feature>
<feature type="helix" evidence="5">
    <location>
        <begin position="309"/>
        <end position="311"/>
    </location>
</feature>
<feature type="turn" evidence="5">
    <location>
        <begin position="319"/>
        <end position="321"/>
    </location>
</feature>
<feature type="turn" evidence="5">
    <location>
        <begin position="323"/>
        <end position="325"/>
    </location>
</feature>
<feature type="helix" evidence="5">
    <location>
        <begin position="332"/>
        <end position="334"/>
    </location>
</feature>
<feature type="helix" evidence="5">
    <location>
        <begin position="335"/>
        <end position="344"/>
    </location>
</feature>
<feature type="strand" evidence="5">
    <location>
        <begin position="345"/>
        <end position="347"/>
    </location>
</feature>
<feature type="strand" evidence="5">
    <location>
        <begin position="350"/>
        <end position="352"/>
    </location>
</feature>
<feature type="helix" evidence="5">
    <location>
        <begin position="353"/>
        <end position="357"/>
    </location>
</feature>
<feature type="helix" evidence="5">
    <location>
        <begin position="362"/>
        <end position="374"/>
    </location>
</feature>
<feature type="strand" evidence="5">
    <location>
        <begin position="383"/>
        <end position="389"/>
    </location>
</feature>
<feature type="strand" evidence="5">
    <location>
        <begin position="392"/>
        <end position="397"/>
    </location>
</feature>
<feature type="turn" evidence="5">
    <location>
        <begin position="398"/>
        <end position="400"/>
    </location>
</feature>
<feature type="strand" evidence="5">
    <location>
        <begin position="401"/>
        <end position="407"/>
    </location>
</feature>
<feature type="helix" evidence="5">
    <location>
        <begin position="412"/>
        <end position="414"/>
    </location>
</feature>
<feature type="strand" evidence="5">
    <location>
        <begin position="419"/>
        <end position="425"/>
    </location>
</feature>
<feature type="strand" evidence="5">
    <location>
        <begin position="428"/>
        <end position="433"/>
    </location>
</feature>
<comment type="function">
    <text>Important for breakdown of endosperm starch during germination.</text>
</comment>
<comment type="catalytic activity">
    <reaction evidence="2">
        <text>Endohydrolysis of (1-&gt;4)-alpha-D-glucosidic linkages in polysaccharides containing three or more (1-&gt;4)-alpha-linked D-glucose units.</text>
        <dbReference type="EC" id="3.2.1.1"/>
    </reaction>
</comment>
<comment type="cofactor">
    <cofactor evidence="2">
        <name>Ca(2+)</name>
        <dbReference type="ChEBI" id="CHEBI:29108"/>
    </cofactor>
    <text evidence="2">Binds 3 Ca(2+) ions per subunit.</text>
</comment>
<comment type="subunit">
    <text>Monomer.</text>
</comment>
<comment type="tissue specificity">
    <text>More abundant in germinating seeds, than in callus, young roots and leaves.</text>
</comment>
<comment type="developmental stage">
    <text>Expressed at a high level during germination in the aleurones cells under the control of the plant hormone gibberellic acid and in the developing grains at a low level.</text>
</comment>
<comment type="PTM">
    <text>Only cereal amylase known to be glycosylated.</text>
</comment>
<comment type="miscellaneous">
    <text evidence="1">Binds starch not only at the active site, but also via accessory binding sites on the protein surface that are important for efficient binding to starch granules and thereby increase enzyme activity.</text>
</comment>
<comment type="similarity">
    <text evidence="4">Belongs to the glycosyl hydrolase 13 family.</text>
</comment>
<comment type="sequence caution" evidence="4">
    <conflict type="erroneous initiation">
        <sequence resource="EMBL-CDS" id="CAA34516"/>
    </conflict>
</comment>
<dbReference type="EC" id="3.2.1.1" evidence="2"/>
<dbReference type="EMBL" id="M24286">
    <property type="protein sequence ID" value="AAA33885.1"/>
    <property type="molecule type" value="mRNA"/>
</dbReference>
<dbReference type="EMBL" id="X16509">
    <property type="protein sequence ID" value="CAA34516.1"/>
    <property type="status" value="ALT_INIT"/>
    <property type="molecule type" value="Genomic_DNA"/>
</dbReference>
<dbReference type="EMBL" id="AP004817">
    <property type="protein sequence ID" value="BAD17125.1"/>
    <property type="molecule type" value="Genomic_DNA"/>
</dbReference>
<dbReference type="EMBL" id="AP005287">
    <property type="protein sequence ID" value="BAD17313.1"/>
    <property type="molecule type" value="Genomic_DNA"/>
</dbReference>
<dbReference type="EMBL" id="AP014958">
    <property type="protein sequence ID" value="BAS81060.1"/>
    <property type="molecule type" value="Genomic_DNA"/>
</dbReference>
<dbReference type="PIR" id="S10013">
    <property type="entry name" value="S10013"/>
</dbReference>
<dbReference type="PIR" id="S12775">
    <property type="entry name" value="S12775"/>
</dbReference>
<dbReference type="RefSeq" id="XP_015622769.1">
    <property type="nucleotide sequence ID" value="XM_015767283.1"/>
</dbReference>
<dbReference type="PDB" id="3WN6">
    <property type="method" value="X-ray"/>
    <property type="resolution" value="2.16 A"/>
    <property type="chains" value="A/B/C/D=31-434"/>
</dbReference>
<dbReference type="PDBsum" id="3WN6"/>
<dbReference type="SMR" id="P17654"/>
<dbReference type="FunCoup" id="P17654">
    <property type="interactions" value="258"/>
</dbReference>
<dbReference type="STRING" id="39947.P17654"/>
<dbReference type="CAZy" id="GH13">
    <property type="family name" value="Glycoside Hydrolase Family 13"/>
</dbReference>
<dbReference type="GlyConnect" id="24">
    <property type="glycosylation" value="10 N-Linked glycans"/>
</dbReference>
<dbReference type="GlyCosmos" id="P17654">
    <property type="glycosylation" value="1 site, 15 glycans"/>
</dbReference>
<dbReference type="PaxDb" id="39947-P17654"/>
<dbReference type="EnsemblPlants" id="Os02t0765600-01">
    <property type="protein sequence ID" value="Os02t0765600-01"/>
    <property type="gene ID" value="Os02g0765600"/>
</dbReference>
<dbReference type="Gramene" id="Os02t0765600-01">
    <property type="protein sequence ID" value="Os02t0765600-01"/>
    <property type="gene ID" value="Os02g0765600"/>
</dbReference>
<dbReference type="eggNOG" id="KOG0471">
    <property type="taxonomic scope" value="Eukaryota"/>
</dbReference>
<dbReference type="HOGENOM" id="CLU_030069_1_0_1"/>
<dbReference type="InParanoid" id="P17654"/>
<dbReference type="OMA" id="HPFGLAC"/>
<dbReference type="OrthoDB" id="550577at2759"/>
<dbReference type="BRENDA" id="3.2.1.1">
    <property type="organism ID" value="4460"/>
</dbReference>
<dbReference type="EvolutionaryTrace" id="P17654"/>
<dbReference type="Proteomes" id="UP000000763">
    <property type="component" value="Chromosome 2"/>
</dbReference>
<dbReference type="Proteomes" id="UP000059680">
    <property type="component" value="Chromosome 2"/>
</dbReference>
<dbReference type="ExpressionAtlas" id="P17654">
    <property type="expression patterns" value="baseline and differential"/>
</dbReference>
<dbReference type="GO" id="GO:0004556">
    <property type="term" value="F:alpha-amylase activity"/>
    <property type="evidence" value="ECO:0000318"/>
    <property type="project" value="GO_Central"/>
</dbReference>
<dbReference type="GO" id="GO:0005509">
    <property type="term" value="F:calcium ion binding"/>
    <property type="evidence" value="ECO:0007669"/>
    <property type="project" value="InterPro"/>
</dbReference>
<dbReference type="GO" id="GO:0005983">
    <property type="term" value="P:starch catabolic process"/>
    <property type="evidence" value="ECO:0000270"/>
    <property type="project" value="Gramene"/>
</dbReference>
<dbReference type="GO" id="GO:0005987">
    <property type="term" value="P:sucrose catabolic process"/>
    <property type="evidence" value="ECO:0000270"/>
    <property type="project" value="Gramene"/>
</dbReference>
<dbReference type="CDD" id="cd11314">
    <property type="entry name" value="AmyAc_arch_bac_plant_AmyA"/>
    <property type="match status" value="1"/>
</dbReference>
<dbReference type="FunFam" id="2.60.40.1180:FF:000021">
    <property type="entry name" value="Alpha-amylase"/>
    <property type="match status" value="1"/>
</dbReference>
<dbReference type="Gene3D" id="3.20.20.80">
    <property type="entry name" value="Glycosidases"/>
    <property type="match status" value="1"/>
</dbReference>
<dbReference type="Gene3D" id="2.60.40.1180">
    <property type="entry name" value="Golgi alpha-mannosidase II"/>
    <property type="match status" value="1"/>
</dbReference>
<dbReference type="InterPro" id="IPR012850">
    <property type="entry name" value="A-amylase_bs_C"/>
</dbReference>
<dbReference type="InterPro" id="IPR013775">
    <property type="entry name" value="A-amylase_pln"/>
</dbReference>
<dbReference type="InterPro" id="IPR006046">
    <property type="entry name" value="Alpha_amylase"/>
</dbReference>
<dbReference type="InterPro" id="IPR006047">
    <property type="entry name" value="Glyco_hydro_13_cat_dom"/>
</dbReference>
<dbReference type="InterPro" id="IPR013780">
    <property type="entry name" value="Glyco_hydro_b"/>
</dbReference>
<dbReference type="InterPro" id="IPR017853">
    <property type="entry name" value="Glycoside_hydrolase_SF"/>
</dbReference>
<dbReference type="PANTHER" id="PTHR43447">
    <property type="entry name" value="ALPHA-AMYLASE"/>
    <property type="match status" value="1"/>
</dbReference>
<dbReference type="Pfam" id="PF07821">
    <property type="entry name" value="Alpha-amyl_C2"/>
    <property type="match status" value="1"/>
</dbReference>
<dbReference type="Pfam" id="PF00128">
    <property type="entry name" value="Alpha-amylase"/>
    <property type="match status" value="1"/>
</dbReference>
<dbReference type="PIRSF" id="PIRSF001028">
    <property type="entry name" value="Alph-amls_plant"/>
    <property type="match status" value="1"/>
</dbReference>
<dbReference type="PRINTS" id="PR00110">
    <property type="entry name" value="ALPHAAMYLASE"/>
</dbReference>
<dbReference type="SMART" id="SM00642">
    <property type="entry name" value="Aamy"/>
    <property type="match status" value="1"/>
</dbReference>
<dbReference type="SMART" id="SM00810">
    <property type="entry name" value="Alpha-amyl_C2"/>
    <property type="match status" value="1"/>
</dbReference>
<dbReference type="SUPFAM" id="SSF51445">
    <property type="entry name" value="(Trans)glycosidases"/>
    <property type="match status" value="1"/>
</dbReference>
<dbReference type="SUPFAM" id="SSF51011">
    <property type="entry name" value="Glycosyl hydrolase domain"/>
    <property type="match status" value="1"/>
</dbReference>
<sequence length="434" mass="48457">MQVLNTMVNKHFLSLSVLIVLLGLSSNLTAGQVLFQGFNWESWKENGGWYNFLMGKVDDIAAAGITHVWLPPPSHSVGEQGYMPGRLYDLDASKYGNEAQLKSLIEAFHGKGVQVIADIVINHRTAEHKDGRGIYCLFEGGTPDSRLDWGPHMICRDDPYGDGTGNPDTGADFAAAPDIDHLNKRVQRELIGWLDWLKMDIGFDAWRLDFAKGYSADMAKIYIDATEPSFAVAEIWTSMANGGDGKPNYDQNAHRQELVNWVDRVGGANSNATAFDFTTKGILNVAVEGELWRLRGEDGKAPGMIGWWPAKATTFVDNHDTGSTQHLWPFPSDKVMQGYAYILTHPGNPCIFYDHFFDWGLKEEIERLVSIRNRQGIHPASELRIMEADSDLYLAEIDGKVITKIGPRYDVEHLIPEGFQVVAHGDGYAIWEKI</sequence>
<keyword id="KW-0002">3D-structure</keyword>
<keyword id="KW-0106">Calcium</keyword>
<keyword id="KW-0119">Carbohydrate metabolism</keyword>
<keyword id="KW-0325">Glycoprotein</keyword>
<keyword id="KW-0326">Glycosidase</keyword>
<keyword id="KW-0378">Hydrolase</keyword>
<keyword id="KW-0479">Metal-binding</keyword>
<keyword id="KW-1185">Reference proteome</keyword>
<keyword id="KW-0732">Signal</keyword>
<name>AMY1_ORYSJ</name>
<protein>
    <recommendedName>
        <fullName>Alpha-amylase</fullName>
        <ecNumber evidence="2">3.2.1.1</ecNumber>
    </recommendedName>
    <alternativeName>
        <fullName>1,4-alpha-D-glucan glucanohydrolase</fullName>
    </alternativeName>
    <alternativeName>
        <fullName>Alpha-amylase isozyme 1B</fullName>
    </alternativeName>
</protein>
<organism>
    <name type="scientific">Oryza sativa subsp. japonica</name>
    <name type="common">Rice</name>
    <dbReference type="NCBI Taxonomy" id="39947"/>
    <lineage>
        <taxon>Eukaryota</taxon>
        <taxon>Viridiplantae</taxon>
        <taxon>Streptophyta</taxon>
        <taxon>Embryophyta</taxon>
        <taxon>Tracheophyta</taxon>
        <taxon>Spermatophyta</taxon>
        <taxon>Magnoliopsida</taxon>
        <taxon>Liliopsida</taxon>
        <taxon>Poales</taxon>
        <taxon>Poaceae</taxon>
        <taxon>BOP clade</taxon>
        <taxon>Oryzoideae</taxon>
        <taxon>Oryzeae</taxon>
        <taxon>Oryzinae</taxon>
        <taxon>Oryza</taxon>
        <taxon>Oryza sativa</taxon>
    </lineage>
</organism>
<accession>P17654</accession>
<accession>Q6Z317</accession>
<evidence type="ECO:0000250" key="1"/>
<evidence type="ECO:0000250" key="2">
    <source>
        <dbReference type="UniProtKB" id="P00693"/>
    </source>
</evidence>
<evidence type="ECO:0000250" key="3">
    <source>
        <dbReference type="UniProtKB" id="P04063"/>
    </source>
</evidence>
<evidence type="ECO:0000305" key="4"/>
<evidence type="ECO:0007829" key="5">
    <source>
        <dbReference type="PDB" id="3WN6"/>
    </source>
</evidence>